<name>YDIT_ECOLI</name>
<protein>
    <recommendedName>
        <fullName>Ferredoxin-like protein YdiT</fullName>
    </recommendedName>
</protein>
<accession>P77714</accession>
<feature type="chain" id="PRO_0000159218" description="Ferredoxin-like protein YdiT">
    <location>
        <begin position="1"/>
        <end position="97"/>
    </location>
</feature>
<organism>
    <name type="scientific">Escherichia coli (strain K12)</name>
    <dbReference type="NCBI Taxonomy" id="83333"/>
    <lineage>
        <taxon>Bacteria</taxon>
        <taxon>Pseudomonadati</taxon>
        <taxon>Pseudomonadota</taxon>
        <taxon>Gammaproteobacteria</taxon>
        <taxon>Enterobacterales</taxon>
        <taxon>Enterobacteriaceae</taxon>
        <taxon>Escherichia</taxon>
    </lineage>
</organism>
<gene>
    <name type="primary">ydiT</name>
    <name type="ordered locus">b1700</name>
    <name type="ordered locus">JW1690</name>
</gene>
<proteinExistence type="inferred from homology"/>
<evidence type="ECO:0000305" key="1"/>
<comment type="function">
    <text>Could be a 3Fe-4S cluster-containing protein. Probably participates in a redox process with YdiQ, YdiR and YdiS.</text>
</comment>
<comment type="similarity">
    <text evidence="1">Belongs to the bacterial-type ferredoxin family. FixX subfamily.</text>
</comment>
<sequence>MSQNATVNVDIKLGVNKFHVDEGHPHIILAENPDINEFHKLMKACPAGLYKQDDAGNIHFDSAGCLECGTCRVLCGNTILEQWQYPAGTFGIDFRYG</sequence>
<dbReference type="EMBL" id="U00096">
    <property type="protein sequence ID" value="AAC74770.1"/>
    <property type="molecule type" value="Genomic_DNA"/>
</dbReference>
<dbReference type="EMBL" id="AP009048">
    <property type="protein sequence ID" value="BAA15469.1"/>
    <property type="molecule type" value="Genomic_DNA"/>
</dbReference>
<dbReference type="PIR" id="D64928">
    <property type="entry name" value="D64928"/>
</dbReference>
<dbReference type="RefSeq" id="NP_416215.1">
    <property type="nucleotide sequence ID" value="NC_000913.3"/>
</dbReference>
<dbReference type="RefSeq" id="WP_000081081.1">
    <property type="nucleotide sequence ID" value="NZ_SSZK01000001.1"/>
</dbReference>
<dbReference type="SMR" id="P77714"/>
<dbReference type="BioGRID" id="4260295">
    <property type="interactions" value="15"/>
</dbReference>
<dbReference type="FunCoup" id="P77714">
    <property type="interactions" value="15"/>
</dbReference>
<dbReference type="STRING" id="511145.b1700"/>
<dbReference type="PaxDb" id="511145-b1700"/>
<dbReference type="EnsemblBacteria" id="AAC74770">
    <property type="protein sequence ID" value="AAC74770"/>
    <property type="gene ID" value="b1700"/>
</dbReference>
<dbReference type="GeneID" id="946214"/>
<dbReference type="KEGG" id="ecj:JW1690"/>
<dbReference type="KEGG" id="eco:b1700"/>
<dbReference type="KEGG" id="ecoc:C3026_09735"/>
<dbReference type="PATRIC" id="fig|1411691.4.peg.557"/>
<dbReference type="EchoBASE" id="EB3736"/>
<dbReference type="eggNOG" id="COG2440">
    <property type="taxonomic scope" value="Bacteria"/>
</dbReference>
<dbReference type="HOGENOM" id="CLU_163428_0_0_6"/>
<dbReference type="InParanoid" id="P77714"/>
<dbReference type="OMA" id="CGTCKFL"/>
<dbReference type="OrthoDB" id="9800260at2"/>
<dbReference type="PhylomeDB" id="P77714"/>
<dbReference type="BioCyc" id="EcoCyc:G6923-MONOMER"/>
<dbReference type="PRO" id="PR:P77714"/>
<dbReference type="Proteomes" id="UP000000625">
    <property type="component" value="Chromosome"/>
</dbReference>
<dbReference type="GO" id="GO:0005506">
    <property type="term" value="F:iron ion binding"/>
    <property type="evidence" value="ECO:0007669"/>
    <property type="project" value="InterPro"/>
</dbReference>
<dbReference type="GO" id="GO:0051536">
    <property type="term" value="F:iron-sulfur cluster binding"/>
    <property type="evidence" value="ECO:0007669"/>
    <property type="project" value="UniProtKB-KW"/>
</dbReference>
<dbReference type="Gene3D" id="3.30.70.20">
    <property type="match status" value="1"/>
</dbReference>
<dbReference type="InterPro" id="IPR017900">
    <property type="entry name" value="4Fe4S_Fe_S_CS"/>
</dbReference>
<dbReference type="InterPro" id="IPR012206">
    <property type="entry name" value="Fd_FixX"/>
</dbReference>
<dbReference type="PANTHER" id="PTHR43082">
    <property type="entry name" value="FERREDOXIN-LIKE"/>
    <property type="match status" value="1"/>
</dbReference>
<dbReference type="PANTHER" id="PTHR43082:SF3">
    <property type="entry name" value="FERREDOXIN-LIKE PROTEIN YDIT"/>
    <property type="match status" value="1"/>
</dbReference>
<dbReference type="PIRSF" id="PIRSF036548">
    <property type="entry name" value="Fdx_FixX"/>
    <property type="match status" value="1"/>
</dbReference>
<dbReference type="SUPFAM" id="SSF54862">
    <property type="entry name" value="4Fe-4S ferredoxins"/>
    <property type="match status" value="1"/>
</dbReference>
<dbReference type="PROSITE" id="PS00198">
    <property type="entry name" value="4FE4S_FER_1"/>
    <property type="match status" value="1"/>
</dbReference>
<reference key="1">
    <citation type="journal article" date="1996" name="DNA Res.">
        <title>A 570-kb DNA sequence of the Escherichia coli K-12 genome corresponding to the 28.0-40.1 min region on the linkage map.</title>
        <authorList>
            <person name="Aiba H."/>
            <person name="Baba T."/>
            <person name="Fujita K."/>
            <person name="Hayashi K."/>
            <person name="Inada T."/>
            <person name="Isono K."/>
            <person name="Itoh T."/>
            <person name="Kasai H."/>
            <person name="Kashimoto K."/>
            <person name="Kimura S."/>
            <person name="Kitakawa M."/>
            <person name="Kitagawa M."/>
            <person name="Makino K."/>
            <person name="Miki T."/>
            <person name="Mizobuchi K."/>
            <person name="Mori H."/>
            <person name="Mori T."/>
            <person name="Motomura K."/>
            <person name="Nakade S."/>
            <person name="Nakamura Y."/>
            <person name="Nashimoto H."/>
            <person name="Nishio Y."/>
            <person name="Oshima T."/>
            <person name="Saito N."/>
            <person name="Sampei G."/>
            <person name="Seki Y."/>
            <person name="Sivasundaram S."/>
            <person name="Tagami H."/>
            <person name="Takeda J."/>
            <person name="Takemoto K."/>
            <person name="Takeuchi Y."/>
            <person name="Wada C."/>
            <person name="Yamamoto Y."/>
            <person name="Horiuchi T."/>
        </authorList>
    </citation>
    <scope>NUCLEOTIDE SEQUENCE [LARGE SCALE GENOMIC DNA]</scope>
    <source>
        <strain>K12 / W3110 / ATCC 27325 / DSM 5911</strain>
    </source>
</reference>
<reference key="2">
    <citation type="journal article" date="1997" name="Science">
        <title>The complete genome sequence of Escherichia coli K-12.</title>
        <authorList>
            <person name="Blattner F.R."/>
            <person name="Plunkett G. III"/>
            <person name="Bloch C.A."/>
            <person name="Perna N.T."/>
            <person name="Burland V."/>
            <person name="Riley M."/>
            <person name="Collado-Vides J."/>
            <person name="Glasner J.D."/>
            <person name="Rode C.K."/>
            <person name="Mayhew G.F."/>
            <person name="Gregor J."/>
            <person name="Davis N.W."/>
            <person name="Kirkpatrick H.A."/>
            <person name="Goeden M.A."/>
            <person name="Rose D.J."/>
            <person name="Mau B."/>
            <person name="Shao Y."/>
        </authorList>
    </citation>
    <scope>NUCLEOTIDE SEQUENCE [LARGE SCALE GENOMIC DNA]</scope>
    <source>
        <strain>K12 / MG1655 / ATCC 47076</strain>
    </source>
</reference>
<reference key="3">
    <citation type="journal article" date="2006" name="Mol. Syst. Biol.">
        <title>Highly accurate genome sequences of Escherichia coli K-12 strains MG1655 and W3110.</title>
        <authorList>
            <person name="Hayashi K."/>
            <person name="Morooka N."/>
            <person name="Yamamoto Y."/>
            <person name="Fujita K."/>
            <person name="Isono K."/>
            <person name="Choi S."/>
            <person name="Ohtsubo E."/>
            <person name="Baba T."/>
            <person name="Wanner B.L."/>
            <person name="Mori H."/>
            <person name="Horiuchi T."/>
        </authorList>
    </citation>
    <scope>NUCLEOTIDE SEQUENCE [LARGE SCALE GENOMIC DNA]</scope>
    <source>
        <strain>K12 / W3110 / ATCC 27325 / DSM 5911</strain>
    </source>
</reference>
<keyword id="KW-0249">Electron transport</keyword>
<keyword id="KW-0408">Iron</keyword>
<keyword id="KW-0411">Iron-sulfur</keyword>
<keyword id="KW-0479">Metal-binding</keyword>
<keyword id="KW-1185">Reference proteome</keyword>
<keyword id="KW-0813">Transport</keyword>